<proteinExistence type="evidence at protein level"/>
<sequence>MRPYYIAIVGSGPSAFFAAASLLKAADTTEDLDMAVDMLEMLPTPWGLVRSGVAPDHPKIKSISKQFEKTAEDPRFRFFGNVVVGEHVQPGELSERYDAVIYAVGAQSDRMLNIPGEDLPGSIAAVDFVGWYNAHPHFEQVSPDLSGARAVVIGNGNVALDVARILLTDPDVLARTDIADHALESLRPRGIQEVVIVGRRGPLQAAFTTLELRELADLDGVDVVIDPAELDGITDEDAAAVGKVCKQNIKVLRGYADREPRPGHRRMVFRFLTSPIEIKGKRKVERIVLGRNELVSDGSGRVAAKDTGEREELPAQLVVRSVGYRGVPTPGLPFDDQSGTIPNVGGRINGSPNEYVVGWIKRGPTGVIGTNKKDAQDTVDTLIKNLGNAKEGAECKSFPEDHADQVADWLAARQPKLVTSAHWQVIDAFERAAGEPHGRPRVKLASLAELLRIGLG</sequence>
<comment type="function">
    <text evidence="1">Transports electrons between ferredoxin and NADPH. May supply electrons to P450 systems (PubMed:12071965). The enzyme can use both NADPH and NADH as a reductant, but the catalytic efficiency is two orders of magnitude higher with NADPH (PubMed:12071965).</text>
</comment>
<comment type="catalytic activity">
    <reaction evidence="1">
        <text>2 reduced [2Fe-2S]-[ferredoxin] + NADP(+) + H(+) = 2 oxidized [2Fe-2S]-[ferredoxin] + NADPH</text>
        <dbReference type="Rhea" id="RHEA:20125"/>
        <dbReference type="Rhea" id="RHEA-COMP:10000"/>
        <dbReference type="Rhea" id="RHEA-COMP:10001"/>
        <dbReference type="ChEBI" id="CHEBI:15378"/>
        <dbReference type="ChEBI" id="CHEBI:33737"/>
        <dbReference type="ChEBI" id="CHEBI:33738"/>
        <dbReference type="ChEBI" id="CHEBI:57783"/>
        <dbReference type="ChEBI" id="CHEBI:58349"/>
        <dbReference type="EC" id="1.18.1.2"/>
    </reaction>
</comment>
<comment type="cofactor">
    <cofactor evidence="1">
        <name>FAD</name>
        <dbReference type="ChEBI" id="CHEBI:57692"/>
    </cofactor>
</comment>
<comment type="biophysicochemical properties">
    <kinetics>
        <KM evidence="1">22 uM for ferricyanide (in the presence of NADPH)</KM>
        <KM evidence="1">14.6 uM for ferricyanide (in the presence of NADH)</KM>
        <KM evidence="1">58 uM for 2,6-dichlorophenol-indophenol (in the presence of NADPH)</KM>
        <KM evidence="1">56 uM for 2,6-dichlorophenol-indophenol (in the presence of NADH)</KM>
        <KM evidence="1">0.45 uM for NADPH (in the presence of ferricyanide)</KM>
        <KM evidence="1">0.89 uM for NADPH (in the presence of 2,6-dichlorophenol-indophenol)</KM>
        <KM evidence="1">68 uM for NADH (in the presence of ferricyanide)</KM>
        <KM evidence="1">83 uM for NADH (in the presence of 2,6-dichlorophenol-indophenol)</KM>
        <text evidence="1">kcat is 63.0 sec(-1) with ferricyanide and NADPH as substrates. kcat is 25.6 sec(-1) with 2,6-dichlorophenol-indophenol and NADPH as substrates. kcat is 42 sec(-1) with ferricyanide and NADH as substrates. kcat is 21 sec(-1) with 2,6-dichlorophenol-indophenol and NADH as substrates.</text>
    </kinetics>
</comment>
<comment type="subunit">
    <text evidence="1 2 3">Monomer.</text>
</comment>
<comment type="similarity">
    <text evidence="5">Belongs to the ferredoxin--NADP reductase type 1 family.</text>
</comment>
<accession>P9WIQ3</accession>
<accession>L0TBK5</accession>
<accession>O05783</accession>
<reference key="1">
    <citation type="journal article" date="1998" name="Nature">
        <title>Deciphering the biology of Mycobacterium tuberculosis from the complete genome sequence.</title>
        <authorList>
            <person name="Cole S.T."/>
            <person name="Brosch R."/>
            <person name="Parkhill J."/>
            <person name="Garnier T."/>
            <person name="Churcher C.M."/>
            <person name="Harris D.E."/>
            <person name="Gordon S.V."/>
            <person name="Eiglmeier K."/>
            <person name="Gas S."/>
            <person name="Barry C.E. III"/>
            <person name="Tekaia F."/>
            <person name="Badcock K."/>
            <person name="Basham D."/>
            <person name="Brown D."/>
            <person name="Chillingworth T."/>
            <person name="Connor R."/>
            <person name="Davies R.M."/>
            <person name="Devlin K."/>
            <person name="Feltwell T."/>
            <person name="Gentles S."/>
            <person name="Hamlin N."/>
            <person name="Holroyd S."/>
            <person name="Hornsby T."/>
            <person name="Jagels K."/>
            <person name="Krogh A."/>
            <person name="McLean J."/>
            <person name="Moule S."/>
            <person name="Murphy L.D."/>
            <person name="Oliver S."/>
            <person name="Osborne J."/>
            <person name="Quail M.A."/>
            <person name="Rajandream M.A."/>
            <person name="Rogers J."/>
            <person name="Rutter S."/>
            <person name="Seeger K."/>
            <person name="Skelton S."/>
            <person name="Squares S."/>
            <person name="Squares R."/>
            <person name="Sulston J.E."/>
            <person name="Taylor K."/>
            <person name="Whitehead S."/>
            <person name="Barrell B.G."/>
        </authorList>
    </citation>
    <scope>NUCLEOTIDE SEQUENCE [LARGE SCALE GENOMIC DNA]</scope>
    <source>
        <strain>ATCC 25618 / H37Rv</strain>
    </source>
</reference>
<reference key="2">
    <citation type="journal article" date="2002" name="Eur. J. Biochem.">
        <title>Mycobacterium tuberculosis FprA, a novel bacterial NADPH-ferredoxin reductase.</title>
        <authorList>
            <person name="Fischer F."/>
            <person name="Raimondi D."/>
            <person name="Aliverti A."/>
            <person name="Zanetti G."/>
        </authorList>
    </citation>
    <scope>PROTEIN SEQUENCE OF 1-21</scope>
    <scope>FUNCTION</scope>
    <scope>CATALYTIC ACTIVITY</scope>
    <scope>BIOPHYSICOCHEMICAL PROPERTIES</scope>
    <scope>COFACTOR</scope>
    <scope>SUBUNIT</scope>
</reference>
<reference key="3">
    <citation type="journal article" date="2003" name="Biochem. J.">
        <title>Kinetic, spectroscopic and thermodynamic characterization of the Mycobacterium tuberculosis adrenodoxin reductase homologue FprA.</title>
        <authorList>
            <person name="McLean K.J."/>
            <person name="Scrutton N.S."/>
            <person name="Munro A.W."/>
        </authorList>
    </citation>
    <scope>ENZYME KINETICS</scope>
    <scope>REDOX POTENTIOMETRY</scope>
    <scope>ABSORPTION SPECTROSCOPY</scope>
    <scope>CIRCULAR DICHROISM ANALYSIS</scope>
    <scope>EPR SPECTROSCOPY</scope>
</reference>
<reference key="4">
    <citation type="journal article" date="2011" name="Mol. Cell. Proteomics">
        <title>Proteogenomic analysis of Mycobacterium tuberculosis by high resolution mass spectrometry.</title>
        <authorList>
            <person name="Kelkar D.S."/>
            <person name="Kumar D."/>
            <person name="Kumar P."/>
            <person name="Balakrishnan L."/>
            <person name="Muthusamy B."/>
            <person name="Yadav A.K."/>
            <person name="Shrivastava P."/>
            <person name="Marimuthu A."/>
            <person name="Anand S."/>
            <person name="Sundaram H."/>
            <person name="Kingsbury R."/>
            <person name="Harsha H.C."/>
            <person name="Nair B."/>
            <person name="Prasad T.S."/>
            <person name="Chauhan D.S."/>
            <person name="Katoch K."/>
            <person name="Katoch V.M."/>
            <person name="Kumar P."/>
            <person name="Chaerkady R."/>
            <person name="Ramachandran S."/>
            <person name="Dash D."/>
            <person name="Pandey A."/>
        </authorList>
    </citation>
    <scope>IDENTIFICATION BY MASS SPECTROMETRY [LARGE SCALE ANALYSIS]</scope>
    <source>
        <strain>ATCC 25618 / H37Rv</strain>
    </source>
</reference>
<reference key="5">
    <citation type="journal article" date="2002" name="Biochemistry">
        <title>A covalent modification of NADP+ revealed by the atomic resolution structure of FprA, a Mycobacterium tuberculosis oxidoreductase.</title>
        <authorList>
            <person name="Bossi R.T."/>
            <person name="Aliverti A."/>
            <person name="Raimondi D."/>
            <person name="Fischer F."/>
            <person name="Zanetti G."/>
            <person name="Ferrari D."/>
            <person name="Tahallah N."/>
            <person name="Maier C.S."/>
            <person name="Heck A.J."/>
            <person name="Rizzi M."/>
            <person name="Mattevi A."/>
        </authorList>
    </citation>
    <scope>X-RAY CRYSTALLOGRAPHY (1.05 ANGSTROMS) IN COMPLEX WITH NADP</scope>
    <scope>SUBUNIT</scope>
</reference>
<reference key="6">
    <citation type="journal article" date="2006" name="Biochemistry">
        <title>Role of the His57-Glu214 ionic couple located in the active site of Mycobacterium tuberculosis FprA.</title>
        <authorList>
            <person name="Pennati A."/>
            <person name="Razeto A."/>
            <person name="de Rosa M."/>
            <person name="Pandini V."/>
            <person name="Vanoni M.A."/>
            <person name="Mattevi A."/>
            <person name="Coda A."/>
            <person name="Aliverti A."/>
            <person name="Zanetti G."/>
        </authorList>
    </citation>
    <scope>X-RAY CRYSTALLOGRAPHY (1.8 ANGSTROMS) OF MUTANT GLN-57 IN COMPLEX WITH FAD AND NADPH</scope>
    <scope>SUBUNIT</scope>
</reference>
<feature type="chain" id="PRO_0000087329" description="NADPH-ferredoxin reductase FprA">
    <location>
        <begin position="1"/>
        <end position="456"/>
    </location>
</feature>
<feature type="binding site" evidence="3">
    <location>
        <position position="14"/>
    </location>
    <ligand>
        <name>FAD</name>
        <dbReference type="ChEBI" id="CHEBI:57692"/>
    </ligand>
</feature>
<feature type="binding site" evidence="3">
    <location>
        <position position="40"/>
    </location>
    <ligand>
        <name>FAD</name>
        <dbReference type="ChEBI" id="CHEBI:57692"/>
    </ligand>
</feature>
<feature type="binding site" evidence="3">
    <location>
        <position position="48"/>
    </location>
    <ligand>
        <name>FAD</name>
        <dbReference type="ChEBI" id="CHEBI:57692"/>
    </ligand>
</feature>
<feature type="binding site" evidence="3">
    <location>
        <position position="84"/>
    </location>
    <ligand>
        <name>FAD</name>
        <dbReference type="ChEBI" id="CHEBI:57692"/>
    </ligand>
</feature>
<feature type="binding site" evidence="2 3">
    <location>
        <position position="110"/>
    </location>
    <ligand>
        <name>NADP(+)</name>
        <dbReference type="ChEBI" id="CHEBI:58349"/>
    </ligand>
</feature>
<feature type="binding site" evidence="2 3">
    <location>
        <begin position="155"/>
        <end position="158"/>
    </location>
    <ligand>
        <name>NADP(+)</name>
        <dbReference type="ChEBI" id="CHEBI:58349"/>
    </ligand>
</feature>
<feature type="binding site" evidence="2 3">
    <location>
        <begin position="199"/>
        <end position="200"/>
    </location>
    <ligand>
        <name>NADP(+)</name>
        <dbReference type="ChEBI" id="CHEBI:58349"/>
    </ligand>
</feature>
<feature type="binding site" evidence="2 3">
    <location>
        <position position="211"/>
    </location>
    <ligand>
        <name>NADP(+)</name>
        <dbReference type="ChEBI" id="CHEBI:58349"/>
    </ligand>
</feature>
<feature type="binding site" evidence="3">
    <location>
        <position position="359"/>
    </location>
    <ligand>
        <name>FAD</name>
        <dbReference type="ChEBI" id="CHEBI:57692"/>
    </ligand>
</feature>
<feature type="binding site" evidence="3">
    <location>
        <begin position="366"/>
        <end position="368"/>
    </location>
    <ligand>
        <name>FAD</name>
        <dbReference type="ChEBI" id="CHEBI:57692"/>
    </ligand>
</feature>
<feature type="binding site" evidence="2 3">
    <location>
        <position position="366"/>
    </location>
    <ligand>
        <name>NADP(+)</name>
        <dbReference type="ChEBI" id="CHEBI:58349"/>
    </ligand>
</feature>
<feature type="mutagenesis site" description="Reduces activity 4-fold.">
    <original>H</original>
    <variation>A</variation>
    <variation>Q</variation>
    <location>
        <position position="57"/>
    </location>
</feature>
<feature type="mutagenesis site" description="No effect on activity. Decreases Km for NADP 2-fold.">
    <original>E</original>
    <variation>A</variation>
    <location>
        <position position="214"/>
    </location>
</feature>
<feature type="strand" evidence="6">
    <location>
        <begin position="4"/>
        <end position="9"/>
    </location>
</feature>
<feature type="helix" evidence="6">
    <location>
        <begin position="13"/>
        <end position="28"/>
    </location>
</feature>
<feature type="strand" evidence="6">
    <location>
        <begin position="34"/>
        <end position="44"/>
    </location>
</feature>
<feature type="helix" evidence="6">
    <location>
        <begin position="48"/>
        <end position="51"/>
    </location>
</feature>
<feature type="helix" evidence="6">
    <location>
        <begin position="59"/>
        <end position="63"/>
    </location>
</feature>
<feature type="helix" evidence="6">
    <location>
        <begin position="64"/>
        <end position="71"/>
    </location>
</feature>
<feature type="strand" evidence="6">
    <location>
        <begin position="76"/>
        <end position="81"/>
    </location>
</feature>
<feature type="turn" evidence="6">
    <location>
        <begin position="84"/>
        <end position="86"/>
    </location>
</feature>
<feature type="helix" evidence="6">
    <location>
        <begin position="90"/>
        <end position="96"/>
    </location>
</feature>
<feature type="strand" evidence="6">
    <location>
        <begin position="97"/>
        <end position="102"/>
    </location>
</feature>
<feature type="turn" evidence="6">
    <location>
        <begin position="115"/>
        <end position="118"/>
    </location>
</feature>
<feature type="strand" evidence="6">
    <location>
        <begin position="122"/>
        <end position="124"/>
    </location>
</feature>
<feature type="helix" evidence="6">
    <location>
        <begin position="125"/>
        <end position="132"/>
    </location>
</feature>
<feature type="helix" evidence="6">
    <location>
        <begin position="136"/>
        <end position="138"/>
    </location>
</feature>
<feature type="strand" evidence="6">
    <location>
        <begin position="147"/>
        <end position="153"/>
    </location>
</feature>
<feature type="helix" evidence="6">
    <location>
        <begin position="157"/>
        <end position="167"/>
    </location>
</feature>
<feature type="helix" evidence="6">
    <location>
        <begin position="170"/>
        <end position="173"/>
    </location>
</feature>
<feature type="helix" evidence="6">
    <location>
        <begin position="180"/>
        <end position="186"/>
    </location>
</feature>
<feature type="strand" evidence="6">
    <location>
        <begin position="193"/>
        <end position="197"/>
    </location>
</feature>
<feature type="helix" evidence="6">
    <location>
        <begin position="202"/>
        <end position="204"/>
    </location>
</feature>
<feature type="helix" evidence="6">
    <location>
        <begin position="209"/>
        <end position="214"/>
    </location>
</feature>
<feature type="helix" evidence="6">
    <location>
        <begin position="215"/>
        <end position="217"/>
    </location>
</feature>
<feature type="strand" evidence="6">
    <location>
        <begin position="221"/>
        <end position="224"/>
    </location>
</feature>
<feature type="helix" evidence="6">
    <location>
        <begin position="227"/>
        <end position="230"/>
    </location>
</feature>
<feature type="helix" evidence="6">
    <location>
        <begin position="235"/>
        <end position="241"/>
    </location>
</feature>
<feature type="helix" evidence="6">
    <location>
        <begin position="243"/>
        <end position="256"/>
    </location>
</feature>
<feature type="strand" evidence="6">
    <location>
        <begin position="264"/>
        <end position="270"/>
    </location>
</feature>
<feature type="strand" evidence="6">
    <location>
        <begin position="272"/>
        <end position="279"/>
    </location>
</feature>
<feature type="strand" evidence="6">
    <location>
        <begin position="281"/>
        <end position="283"/>
    </location>
</feature>
<feature type="strand" evidence="6">
    <location>
        <begin position="286"/>
        <end position="296"/>
    </location>
</feature>
<feature type="strand" evidence="6">
    <location>
        <begin position="298"/>
        <end position="314"/>
    </location>
</feature>
<feature type="strand" evidence="6">
    <location>
        <begin position="316"/>
        <end position="320"/>
    </location>
</feature>
<feature type="turn" evidence="6">
    <location>
        <begin position="336"/>
        <end position="339"/>
    </location>
</feature>
<feature type="strand" evidence="6">
    <location>
        <begin position="352"/>
        <end position="356"/>
    </location>
</feature>
<feature type="helix" evidence="6">
    <location>
        <begin position="359"/>
        <end position="362"/>
    </location>
</feature>
<feature type="helix" evidence="6">
    <location>
        <begin position="368"/>
        <end position="370"/>
    </location>
</feature>
<feature type="helix" evidence="6">
    <location>
        <begin position="371"/>
        <end position="391"/>
    </location>
</feature>
<feature type="helix" evidence="6">
    <location>
        <begin position="402"/>
        <end position="413"/>
    </location>
</feature>
<feature type="helix" evidence="6">
    <location>
        <begin position="420"/>
        <end position="434"/>
    </location>
</feature>
<feature type="helix" evidence="6">
    <location>
        <begin position="435"/>
        <end position="437"/>
    </location>
</feature>
<feature type="helix" evidence="6">
    <location>
        <begin position="447"/>
        <end position="454"/>
    </location>
</feature>
<evidence type="ECO:0000269" key="1">
    <source>
    </source>
</evidence>
<evidence type="ECO:0000269" key="2">
    <source>
    </source>
</evidence>
<evidence type="ECO:0000269" key="3">
    <source>
    </source>
</evidence>
<evidence type="ECO:0000303" key="4">
    <source>
    </source>
</evidence>
<evidence type="ECO:0000305" key="5"/>
<evidence type="ECO:0007829" key="6">
    <source>
        <dbReference type="PDB" id="1LQT"/>
    </source>
</evidence>
<protein>
    <recommendedName>
        <fullName>NADPH-ferredoxin reductase FprA</fullName>
        <shortName>NFR</shortName>
        <ecNumber evidence="1">1.18.1.2</ecNumber>
    </recommendedName>
</protein>
<keyword id="KW-0002">3D-structure</keyword>
<keyword id="KW-0903">Direct protein sequencing</keyword>
<keyword id="KW-0274">FAD</keyword>
<keyword id="KW-0285">Flavoprotein</keyword>
<keyword id="KW-0521">NADP</keyword>
<keyword id="KW-0560">Oxidoreductase</keyword>
<keyword id="KW-1185">Reference proteome</keyword>
<gene>
    <name evidence="4" type="primary">fprA</name>
    <name type="ordered locus">Rv3106</name>
    <name type="ORF">MTCY164.16</name>
</gene>
<name>FPRA_MYCTU</name>
<dbReference type="EC" id="1.18.1.2" evidence="1"/>
<dbReference type="EMBL" id="AL123456">
    <property type="protein sequence ID" value="CCP45916.1"/>
    <property type="molecule type" value="Genomic_DNA"/>
</dbReference>
<dbReference type="PIR" id="A70920">
    <property type="entry name" value="A70920"/>
</dbReference>
<dbReference type="RefSeq" id="NP_217622.1">
    <property type="nucleotide sequence ID" value="NC_000962.3"/>
</dbReference>
<dbReference type="RefSeq" id="WP_003900632.1">
    <property type="nucleotide sequence ID" value="NZ_NVQJ01000011.1"/>
</dbReference>
<dbReference type="PDB" id="1LQT">
    <property type="method" value="X-ray"/>
    <property type="resolution" value="1.05 A"/>
    <property type="chains" value="A/B=1-456"/>
</dbReference>
<dbReference type="PDB" id="1LQU">
    <property type="method" value="X-ray"/>
    <property type="resolution" value="1.25 A"/>
    <property type="chains" value="A/B=1-456"/>
</dbReference>
<dbReference type="PDB" id="2C7G">
    <property type="method" value="X-ray"/>
    <property type="resolution" value="1.80 A"/>
    <property type="chains" value="A=1-456"/>
</dbReference>
<dbReference type="PDBsum" id="1LQT"/>
<dbReference type="PDBsum" id="1LQU"/>
<dbReference type="PDBsum" id="2C7G"/>
<dbReference type="SMR" id="P9WIQ3"/>
<dbReference type="FunCoup" id="P9WIQ3">
    <property type="interactions" value="279"/>
</dbReference>
<dbReference type="STRING" id="83332.Rv3106"/>
<dbReference type="DrugBank" id="DB01753">
    <property type="generic name" value="4-oxo-nicotinamide-adenine dinucleotide phosphate"/>
</dbReference>
<dbReference type="DrugBank" id="DB03147">
    <property type="generic name" value="Flavin adenine dinucleotide"/>
</dbReference>
<dbReference type="PaxDb" id="83332-Rv3106"/>
<dbReference type="DNASU" id="888839"/>
<dbReference type="GeneID" id="888839"/>
<dbReference type="KEGG" id="mtu:Rv3106"/>
<dbReference type="KEGG" id="mtv:RVBD_3106"/>
<dbReference type="TubercuList" id="Rv3106"/>
<dbReference type="eggNOG" id="COG0493">
    <property type="taxonomic scope" value="Bacteria"/>
</dbReference>
<dbReference type="InParanoid" id="P9WIQ3"/>
<dbReference type="OrthoDB" id="289202at2"/>
<dbReference type="PhylomeDB" id="P9WIQ3"/>
<dbReference type="BRENDA" id="1.18.1.6">
    <property type="organism ID" value="3445"/>
</dbReference>
<dbReference type="SABIO-RK" id="P9WIQ3"/>
<dbReference type="EvolutionaryTrace" id="P9WIQ3"/>
<dbReference type="Proteomes" id="UP000001584">
    <property type="component" value="Chromosome"/>
</dbReference>
<dbReference type="GO" id="GO:0009274">
    <property type="term" value="C:peptidoglycan-based cell wall"/>
    <property type="evidence" value="ECO:0007005"/>
    <property type="project" value="MTBBASE"/>
</dbReference>
<dbReference type="GO" id="GO:0008860">
    <property type="term" value="F:ferredoxin-NAD+ reductase activity"/>
    <property type="evidence" value="ECO:0000314"/>
    <property type="project" value="MTBBASE"/>
</dbReference>
<dbReference type="GO" id="GO:0004324">
    <property type="term" value="F:ferredoxin-NADP+ reductase activity"/>
    <property type="evidence" value="ECO:0000314"/>
    <property type="project" value="MTBBASE"/>
</dbReference>
<dbReference type="GO" id="GO:0050660">
    <property type="term" value="F:flavin adenine dinucleotide binding"/>
    <property type="evidence" value="ECO:0000314"/>
    <property type="project" value="MTBBASE"/>
</dbReference>
<dbReference type="GO" id="GO:0070401">
    <property type="term" value="F:NADP+ binding"/>
    <property type="evidence" value="ECO:0000314"/>
    <property type="project" value="MTBBASE"/>
</dbReference>
<dbReference type="GO" id="GO:0016491">
    <property type="term" value="F:oxidoreductase activity"/>
    <property type="evidence" value="ECO:0000318"/>
    <property type="project" value="GO_Central"/>
</dbReference>
<dbReference type="Gene3D" id="3.50.50.60">
    <property type="entry name" value="FAD/NAD(P)-binding domain"/>
    <property type="match status" value="1"/>
</dbReference>
<dbReference type="Gene3D" id="3.40.50.720">
    <property type="entry name" value="NAD(P)-binding Rossmann-like Domain"/>
    <property type="match status" value="1"/>
</dbReference>
<dbReference type="InterPro" id="IPR036188">
    <property type="entry name" value="FAD/NAD-bd_sf"/>
</dbReference>
<dbReference type="InterPro" id="IPR023753">
    <property type="entry name" value="FAD/NAD-binding_dom"/>
</dbReference>
<dbReference type="InterPro" id="IPR055275">
    <property type="entry name" value="Ferredox_Rdtase"/>
</dbReference>
<dbReference type="InterPro" id="IPR021163">
    <property type="entry name" value="Ferredox_Rdtase_adrenod"/>
</dbReference>
<dbReference type="PANTHER" id="PTHR48467">
    <property type="entry name" value="GLUTAMATE SYNTHASE 1 [NADH], CHLOROPLASTIC-LIKE"/>
    <property type="match status" value="1"/>
</dbReference>
<dbReference type="PANTHER" id="PTHR48467:SF1">
    <property type="entry name" value="GLUTAMATE SYNTHASE 1 [NADH], CHLOROPLASTIC-LIKE"/>
    <property type="match status" value="1"/>
</dbReference>
<dbReference type="Pfam" id="PF07992">
    <property type="entry name" value="Pyr_redox_2"/>
    <property type="match status" value="1"/>
</dbReference>
<dbReference type="PIRSF" id="PIRSF000362">
    <property type="entry name" value="FNR"/>
    <property type="match status" value="1"/>
</dbReference>
<dbReference type="PRINTS" id="PR00419">
    <property type="entry name" value="ADXRDTASE"/>
</dbReference>
<dbReference type="SUPFAM" id="SSF51971">
    <property type="entry name" value="Nucleotide-binding domain"/>
    <property type="match status" value="2"/>
</dbReference>
<organism>
    <name type="scientific">Mycobacterium tuberculosis (strain ATCC 25618 / H37Rv)</name>
    <dbReference type="NCBI Taxonomy" id="83332"/>
    <lineage>
        <taxon>Bacteria</taxon>
        <taxon>Bacillati</taxon>
        <taxon>Actinomycetota</taxon>
        <taxon>Actinomycetes</taxon>
        <taxon>Mycobacteriales</taxon>
        <taxon>Mycobacteriaceae</taxon>
        <taxon>Mycobacterium</taxon>
        <taxon>Mycobacterium tuberculosis complex</taxon>
    </lineage>
</organism>